<comment type="function">
    <text evidence="1">Specifically methylates guanosine-37 in various tRNAs.</text>
</comment>
<comment type="catalytic activity">
    <reaction evidence="1">
        <text>guanosine(37) in tRNA + S-adenosyl-L-methionine = N(1)-methylguanosine(37) in tRNA + S-adenosyl-L-homocysteine + H(+)</text>
        <dbReference type="Rhea" id="RHEA:36899"/>
        <dbReference type="Rhea" id="RHEA-COMP:10145"/>
        <dbReference type="Rhea" id="RHEA-COMP:10147"/>
        <dbReference type="ChEBI" id="CHEBI:15378"/>
        <dbReference type="ChEBI" id="CHEBI:57856"/>
        <dbReference type="ChEBI" id="CHEBI:59789"/>
        <dbReference type="ChEBI" id="CHEBI:73542"/>
        <dbReference type="ChEBI" id="CHEBI:74269"/>
        <dbReference type="EC" id="2.1.1.228"/>
    </reaction>
</comment>
<comment type="subunit">
    <text evidence="1">Homodimer.</text>
</comment>
<comment type="subcellular location">
    <subcellularLocation>
        <location evidence="1">Cytoplasm</location>
    </subcellularLocation>
</comment>
<comment type="similarity">
    <text evidence="1">Belongs to the RNA methyltransferase TrmD family.</text>
</comment>
<protein>
    <recommendedName>
        <fullName evidence="1">tRNA (guanine-N(1)-)-methyltransferase</fullName>
        <ecNumber evidence="1">2.1.1.228</ecNumber>
    </recommendedName>
    <alternativeName>
        <fullName evidence="1">M1G-methyltransferase</fullName>
    </alternativeName>
    <alternativeName>
        <fullName evidence="1">tRNA [GM37] methyltransferase</fullName>
    </alternativeName>
</protein>
<gene>
    <name evidence="1" type="primary">trmD</name>
    <name type="ordered locus">SaurJH1_1324</name>
</gene>
<feature type="chain" id="PRO_1000082539" description="tRNA (guanine-N(1)-)-methyltransferase">
    <location>
        <begin position="1"/>
        <end position="245"/>
    </location>
</feature>
<feature type="binding site" evidence="1">
    <location>
        <position position="111"/>
    </location>
    <ligand>
        <name>S-adenosyl-L-methionine</name>
        <dbReference type="ChEBI" id="CHEBI:59789"/>
    </ligand>
</feature>
<feature type="binding site" evidence="1">
    <location>
        <begin position="131"/>
        <end position="136"/>
    </location>
    <ligand>
        <name>S-adenosyl-L-methionine</name>
        <dbReference type="ChEBI" id="CHEBI:59789"/>
    </ligand>
</feature>
<evidence type="ECO:0000255" key="1">
    <source>
        <dbReference type="HAMAP-Rule" id="MF_00605"/>
    </source>
</evidence>
<name>TRMD_STAA2</name>
<organism>
    <name type="scientific">Staphylococcus aureus (strain JH1)</name>
    <dbReference type="NCBI Taxonomy" id="359787"/>
    <lineage>
        <taxon>Bacteria</taxon>
        <taxon>Bacillati</taxon>
        <taxon>Bacillota</taxon>
        <taxon>Bacilli</taxon>
        <taxon>Bacillales</taxon>
        <taxon>Staphylococcaceae</taxon>
        <taxon>Staphylococcus</taxon>
    </lineage>
</organism>
<accession>A6U159</accession>
<dbReference type="EC" id="2.1.1.228" evidence="1"/>
<dbReference type="EMBL" id="CP000736">
    <property type="protein sequence ID" value="ABR52177.1"/>
    <property type="molecule type" value="Genomic_DNA"/>
</dbReference>
<dbReference type="SMR" id="A6U159"/>
<dbReference type="KEGG" id="sah:SaurJH1_1324"/>
<dbReference type="HOGENOM" id="CLU_047363_0_1_9"/>
<dbReference type="GO" id="GO:0005829">
    <property type="term" value="C:cytosol"/>
    <property type="evidence" value="ECO:0007669"/>
    <property type="project" value="TreeGrafter"/>
</dbReference>
<dbReference type="GO" id="GO:0052906">
    <property type="term" value="F:tRNA (guanine(37)-N1)-methyltransferase activity"/>
    <property type="evidence" value="ECO:0007669"/>
    <property type="project" value="UniProtKB-UniRule"/>
</dbReference>
<dbReference type="GO" id="GO:0002939">
    <property type="term" value="P:tRNA N1-guanine methylation"/>
    <property type="evidence" value="ECO:0007669"/>
    <property type="project" value="TreeGrafter"/>
</dbReference>
<dbReference type="CDD" id="cd18080">
    <property type="entry name" value="TrmD-like"/>
    <property type="match status" value="1"/>
</dbReference>
<dbReference type="FunFam" id="1.10.1270.20:FF:000001">
    <property type="entry name" value="tRNA (guanine-N(1)-)-methyltransferase"/>
    <property type="match status" value="1"/>
</dbReference>
<dbReference type="FunFam" id="3.40.1280.10:FF:000001">
    <property type="entry name" value="tRNA (guanine-N(1)-)-methyltransferase"/>
    <property type="match status" value="1"/>
</dbReference>
<dbReference type="Gene3D" id="3.40.1280.10">
    <property type="match status" value="1"/>
</dbReference>
<dbReference type="Gene3D" id="1.10.1270.20">
    <property type="entry name" value="tRNA(m1g37)methyltransferase, domain 2"/>
    <property type="match status" value="1"/>
</dbReference>
<dbReference type="HAMAP" id="MF_00605">
    <property type="entry name" value="TrmD"/>
    <property type="match status" value="1"/>
</dbReference>
<dbReference type="InterPro" id="IPR029028">
    <property type="entry name" value="Alpha/beta_knot_MTases"/>
</dbReference>
<dbReference type="InterPro" id="IPR023148">
    <property type="entry name" value="tRNA_m1G_MeTrfase_C_sf"/>
</dbReference>
<dbReference type="InterPro" id="IPR002649">
    <property type="entry name" value="tRNA_m1G_MeTrfase_TrmD"/>
</dbReference>
<dbReference type="InterPro" id="IPR029026">
    <property type="entry name" value="tRNA_m1G_MTases_N"/>
</dbReference>
<dbReference type="InterPro" id="IPR016009">
    <property type="entry name" value="tRNA_MeTrfase_TRMD/TRM10"/>
</dbReference>
<dbReference type="NCBIfam" id="NF000648">
    <property type="entry name" value="PRK00026.1"/>
    <property type="match status" value="1"/>
</dbReference>
<dbReference type="NCBIfam" id="TIGR00088">
    <property type="entry name" value="trmD"/>
    <property type="match status" value="1"/>
</dbReference>
<dbReference type="PANTHER" id="PTHR46417">
    <property type="entry name" value="TRNA (GUANINE-N(1)-)-METHYLTRANSFERASE"/>
    <property type="match status" value="1"/>
</dbReference>
<dbReference type="PANTHER" id="PTHR46417:SF1">
    <property type="entry name" value="TRNA (GUANINE-N(1)-)-METHYLTRANSFERASE"/>
    <property type="match status" value="1"/>
</dbReference>
<dbReference type="Pfam" id="PF01746">
    <property type="entry name" value="tRNA_m1G_MT"/>
    <property type="match status" value="1"/>
</dbReference>
<dbReference type="PIRSF" id="PIRSF000386">
    <property type="entry name" value="tRNA_mtase"/>
    <property type="match status" value="1"/>
</dbReference>
<dbReference type="SUPFAM" id="SSF75217">
    <property type="entry name" value="alpha/beta knot"/>
    <property type="match status" value="1"/>
</dbReference>
<sequence>MKIDYLTLFPEMFDGVLNHSIMKRAQENNKLQINTVNFRDYAINKHNQVDDYPYGGGQGMVLKPEPVFNAMEDLDVTEQTRVILMCPQGEPFSHQKAVELSKADHIVFICGHYEGYDERIRTHLVTDEISMGDYVLTGGELPAMTMTDAIVRLIPGVLGNEQSHQDDSFSDGLLEFPQYTRPREFKGLTVPDVLLSGNHANIDAWRHEQKLIRTYNKRPDLIEKYPLTNEDKQILERYKIGLKKG</sequence>
<proteinExistence type="inferred from homology"/>
<keyword id="KW-0963">Cytoplasm</keyword>
<keyword id="KW-0489">Methyltransferase</keyword>
<keyword id="KW-0949">S-adenosyl-L-methionine</keyword>
<keyword id="KW-0808">Transferase</keyword>
<keyword id="KW-0819">tRNA processing</keyword>
<reference key="1">
    <citation type="submission" date="2007-06" db="EMBL/GenBank/DDBJ databases">
        <title>Complete sequence of chromosome of Staphylococcus aureus subsp. aureus JH1.</title>
        <authorList>
            <consortium name="US DOE Joint Genome Institute"/>
            <person name="Copeland A."/>
            <person name="Lucas S."/>
            <person name="Lapidus A."/>
            <person name="Barry K."/>
            <person name="Detter J.C."/>
            <person name="Glavina del Rio T."/>
            <person name="Hammon N."/>
            <person name="Israni S."/>
            <person name="Dalin E."/>
            <person name="Tice H."/>
            <person name="Pitluck S."/>
            <person name="Chain P."/>
            <person name="Malfatti S."/>
            <person name="Shin M."/>
            <person name="Vergez L."/>
            <person name="Schmutz J."/>
            <person name="Larimer F."/>
            <person name="Land M."/>
            <person name="Hauser L."/>
            <person name="Kyrpides N."/>
            <person name="Ivanova N."/>
            <person name="Tomasz A."/>
            <person name="Richardson P."/>
        </authorList>
    </citation>
    <scope>NUCLEOTIDE SEQUENCE [LARGE SCALE GENOMIC DNA]</scope>
    <source>
        <strain>JH1</strain>
    </source>
</reference>